<proteinExistence type="inferred from homology"/>
<evidence type="ECO:0000255" key="1">
    <source>
        <dbReference type="HAMAP-Rule" id="MF_00087"/>
    </source>
</evidence>
<gene>
    <name evidence="1" type="primary">hemA</name>
    <name type="ordered locus">PputW619_4457</name>
</gene>
<comment type="function">
    <text evidence="1">Catalyzes the NADPH-dependent reduction of glutamyl-tRNA(Glu) to glutamate 1-semialdehyde (GSA).</text>
</comment>
<comment type="catalytic activity">
    <reaction evidence="1">
        <text>(S)-4-amino-5-oxopentanoate + tRNA(Glu) + NADP(+) = L-glutamyl-tRNA(Glu) + NADPH + H(+)</text>
        <dbReference type="Rhea" id="RHEA:12344"/>
        <dbReference type="Rhea" id="RHEA-COMP:9663"/>
        <dbReference type="Rhea" id="RHEA-COMP:9680"/>
        <dbReference type="ChEBI" id="CHEBI:15378"/>
        <dbReference type="ChEBI" id="CHEBI:57501"/>
        <dbReference type="ChEBI" id="CHEBI:57783"/>
        <dbReference type="ChEBI" id="CHEBI:58349"/>
        <dbReference type="ChEBI" id="CHEBI:78442"/>
        <dbReference type="ChEBI" id="CHEBI:78520"/>
        <dbReference type="EC" id="1.2.1.70"/>
    </reaction>
</comment>
<comment type="pathway">
    <text evidence="1">Porphyrin-containing compound metabolism; protoporphyrin-IX biosynthesis; 5-aminolevulinate from L-glutamyl-tRNA(Glu): step 1/2.</text>
</comment>
<comment type="subunit">
    <text evidence="1">Homodimer.</text>
</comment>
<comment type="domain">
    <text evidence="1">Possesses an unusual extended V-shaped dimeric structure with each monomer consisting of three distinct domains arranged along a curved 'spinal' alpha-helix. The N-terminal catalytic domain specifically recognizes the glutamate moiety of the substrate. The second domain is the NADPH-binding domain, and the third C-terminal domain is responsible for dimerization.</text>
</comment>
<comment type="miscellaneous">
    <text evidence="1">During catalysis, the active site Cys acts as a nucleophile attacking the alpha-carbonyl group of tRNA-bound glutamate with the formation of a thioester intermediate between enzyme and glutamate, and the concomitant release of tRNA(Glu). The thioester intermediate is finally reduced by direct hydride transfer from NADPH, to form the product GSA.</text>
</comment>
<comment type="similarity">
    <text evidence="1">Belongs to the glutamyl-tRNA reductase family.</text>
</comment>
<accession>B1JEP7</accession>
<dbReference type="EC" id="1.2.1.70" evidence="1"/>
<dbReference type="EMBL" id="CP000949">
    <property type="protein sequence ID" value="ACA74937.1"/>
    <property type="molecule type" value="Genomic_DNA"/>
</dbReference>
<dbReference type="SMR" id="B1JEP7"/>
<dbReference type="STRING" id="390235.PputW619_4457"/>
<dbReference type="KEGG" id="ppw:PputW619_4457"/>
<dbReference type="eggNOG" id="COG0373">
    <property type="taxonomic scope" value="Bacteria"/>
</dbReference>
<dbReference type="HOGENOM" id="CLU_035113_2_2_6"/>
<dbReference type="OrthoDB" id="110209at2"/>
<dbReference type="UniPathway" id="UPA00251">
    <property type="reaction ID" value="UER00316"/>
</dbReference>
<dbReference type="GO" id="GO:0008883">
    <property type="term" value="F:glutamyl-tRNA reductase activity"/>
    <property type="evidence" value="ECO:0007669"/>
    <property type="project" value="UniProtKB-UniRule"/>
</dbReference>
<dbReference type="GO" id="GO:0050661">
    <property type="term" value="F:NADP binding"/>
    <property type="evidence" value="ECO:0007669"/>
    <property type="project" value="InterPro"/>
</dbReference>
<dbReference type="GO" id="GO:0019353">
    <property type="term" value="P:protoporphyrinogen IX biosynthetic process from glutamate"/>
    <property type="evidence" value="ECO:0007669"/>
    <property type="project" value="TreeGrafter"/>
</dbReference>
<dbReference type="CDD" id="cd05213">
    <property type="entry name" value="NAD_bind_Glutamyl_tRNA_reduct"/>
    <property type="match status" value="1"/>
</dbReference>
<dbReference type="FunFam" id="3.30.460.30:FF:000001">
    <property type="entry name" value="Glutamyl-tRNA reductase"/>
    <property type="match status" value="1"/>
</dbReference>
<dbReference type="FunFam" id="3.40.50.720:FF:000031">
    <property type="entry name" value="Glutamyl-tRNA reductase"/>
    <property type="match status" value="1"/>
</dbReference>
<dbReference type="Gene3D" id="3.30.460.30">
    <property type="entry name" value="Glutamyl-tRNA reductase, N-terminal domain"/>
    <property type="match status" value="1"/>
</dbReference>
<dbReference type="Gene3D" id="3.40.50.720">
    <property type="entry name" value="NAD(P)-binding Rossmann-like Domain"/>
    <property type="match status" value="1"/>
</dbReference>
<dbReference type="HAMAP" id="MF_00087">
    <property type="entry name" value="Glu_tRNA_reductase"/>
    <property type="match status" value="1"/>
</dbReference>
<dbReference type="InterPro" id="IPR000343">
    <property type="entry name" value="4pyrrol_synth_GluRdtase"/>
</dbReference>
<dbReference type="InterPro" id="IPR015896">
    <property type="entry name" value="4pyrrol_synth_GluRdtase_dimer"/>
</dbReference>
<dbReference type="InterPro" id="IPR015895">
    <property type="entry name" value="4pyrrol_synth_GluRdtase_N"/>
</dbReference>
<dbReference type="InterPro" id="IPR018214">
    <property type="entry name" value="GluRdtase_CS"/>
</dbReference>
<dbReference type="InterPro" id="IPR036453">
    <property type="entry name" value="GluRdtase_dimer_dom_sf"/>
</dbReference>
<dbReference type="InterPro" id="IPR036343">
    <property type="entry name" value="GluRdtase_N_sf"/>
</dbReference>
<dbReference type="InterPro" id="IPR036291">
    <property type="entry name" value="NAD(P)-bd_dom_sf"/>
</dbReference>
<dbReference type="InterPro" id="IPR006151">
    <property type="entry name" value="Shikm_DH/Glu-tRNA_Rdtase"/>
</dbReference>
<dbReference type="NCBIfam" id="TIGR01035">
    <property type="entry name" value="hemA"/>
    <property type="match status" value="1"/>
</dbReference>
<dbReference type="PANTHER" id="PTHR43013">
    <property type="entry name" value="GLUTAMYL-TRNA REDUCTASE"/>
    <property type="match status" value="1"/>
</dbReference>
<dbReference type="PANTHER" id="PTHR43013:SF1">
    <property type="entry name" value="GLUTAMYL-TRNA REDUCTASE"/>
    <property type="match status" value="1"/>
</dbReference>
<dbReference type="Pfam" id="PF00745">
    <property type="entry name" value="GlutR_dimer"/>
    <property type="match status" value="1"/>
</dbReference>
<dbReference type="Pfam" id="PF05201">
    <property type="entry name" value="GlutR_N"/>
    <property type="match status" value="1"/>
</dbReference>
<dbReference type="Pfam" id="PF01488">
    <property type="entry name" value="Shikimate_DH"/>
    <property type="match status" value="1"/>
</dbReference>
<dbReference type="PIRSF" id="PIRSF000445">
    <property type="entry name" value="4pyrrol_synth_GluRdtase"/>
    <property type="match status" value="1"/>
</dbReference>
<dbReference type="SUPFAM" id="SSF69742">
    <property type="entry name" value="Glutamyl tRNA-reductase catalytic, N-terminal domain"/>
    <property type="match status" value="1"/>
</dbReference>
<dbReference type="SUPFAM" id="SSF69075">
    <property type="entry name" value="Glutamyl tRNA-reductase dimerization domain"/>
    <property type="match status" value="1"/>
</dbReference>
<dbReference type="SUPFAM" id="SSF51735">
    <property type="entry name" value="NAD(P)-binding Rossmann-fold domains"/>
    <property type="match status" value="1"/>
</dbReference>
<dbReference type="PROSITE" id="PS00747">
    <property type="entry name" value="GLUTR"/>
    <property type="match status" value="1"/>
</dbReference>
<feature type="chain" id="PRO_1000093160" description="Glutamyl-tRNA reductase">
    <location>
        <begin position="1"/>
        <end position="425"/>
    </location>
</feature>
<feature type="active site" description="Nucleophile" evidence="1">
    <location>
        <position position="50"/>
    </location>
</feature>
<feature type="binding site" evidence="1">
    <location>
        <begin position="49"/>
        <end position="52"/>
    </location>
    <ligand>
        <name>substrate</name>
    </ligand>
</feature>
<feature type="binding site" evidence="1">
    <location>
        <position position="107"/>
    </location>
    <ligand>
        <name>substrate</name>
    </ligand>
</feature>
<feature type="binding site" evidence="1">
    <location>
        <begin position="112"/>
        <end position="114"/>
    </location>
    <ligand>
        <name>substrate</name>
    </ligand>
</feature>
<feature type="binding site" evidence="1">
    <location>
        <position position="118"/>
    </location>
    <ligand>
        <name>substrate</name>
    </ligand>
</feature>
<feature type="binding site" evidence="1">
    <location>
        <begin position="187"/>
        <end position="192"/>
    </location>
    <ligand>
        <name>NADP(+)</name>
        <dbReference type="ChEBI" id="CHEBI:58349"/>
    </ligand>
</feature>
<feature type="site" description="Important for activity" evidence="1">
    <location>
        <position position="97"/>
    </location>
</feature>
<organism>
    <name type="scientific">Pseudomonas putida (strain W619)</name>
    <dbReference type="NCBI Taxonomy" id="390235"/>
    <lineage>
        <taxon>Bacteria</taxon>
        <taxon>Pseudomonadati</taxon>
        <taxon>Pseudomonadota</taxon>
        <taxon>Gammaproteobacteria</taxon>
        <taxon>Pseudomonadales</taxon>
        <taxon>Pseudomonadaceae</taxon>
        <taxon>Pseudomonas</taxon>
    </lineage>
</organism>
<keyword id="KW-0521">NADP</keyword>
<keyword id="KW-0560">Oxidoreductase</keyword>
<keyword id="KW-0627">Porphyrin biosynthesis</keyword>
<sequence>MAFLALGINHKTASVDVRERVAFTPEQLVDALQQLCRLTASREAAILSTCNRSELYIEQDQLSAEAVLQWLADYHRLSLDELRASAYIHEEHDAVRHMMRVASGLDSLVLGEPQILGQMKSAYAVAREAGTVGPLLGRLFQATFSAAKQVRTDTAIGENPVSVAFAAVSLARQIFSDLGRSQALLIGAGETITLVARHLHEQGVRRIVVANRTLERASLLAEQFGAHAVLLADIPQELAHSDIVISSTASQLPILGKGAVESALKQRRHKPIFMVDIAVPRDIEPEVGELDDVYLYTVDDLHEVVAENLKSRQGAAQAAEELVSVGAEDFMVRLRELAAVDVLRAYRQQSERLRDEELQKAQRLLANGGNPEDVLAQLARGLTNKLLHAPSVQLKKLSAEGRLDALAMAQELFALNEGSTDKSLQ</sequence>
<protein>
    <recommendedName>
        <fullName evidence="1">Glutamyl-tRNA reductase</fullName>
        <shortName evidence="1">GluTR</shortName>
        <ecNumber evidence="1">1.2.1.70</ecNumber>
    </recommendedName>
</protein>
<reference key="1">
    <citation type="submission" date="2008-02" db="EMBL/GenBank/DDBJ databases">
        <title>Complete sequence of Pseudomonas putida W619.</title>
        <authorList>
            <person name="Copeland A."/>
            <person name="Lucas S."/>
            <person name="Lapidus A."/>
            <person name="Barry K."/>
            <person name="Detter J.C."/>
            <person name="Glavina del Rio T."/>
            <person name="Dalin E."/>
            <person name="Tice H."/>
            <person name="Pitluck S."/>
            <person name="Chain P."/>
            <person name="Malfatti S."/>
            <person name="Shin M."/>
            <person name="Vergez L."/>
            <person name="Schmutz J."/>
            <person name="Larimer F."/>
            <person name="Land M."/>
            <person name="Hauser L."/>
            <person name="Kyrpides N."/>
            <person name="Kim E."/>
            <person name="Taghavi S."/>
            <person name="Vangronsveld D."/>
            <person name="van der Lelie D."/>
            <person name="Richardson P."/>
        </authorList>
    </citation>
    <scope>NUCLEOTIDE SEQUENCE [LARGE SCALE GENOMIC DNA]</scope>
    <source>
        <strain>W619</strain>
    </source>
</reference>
<name>HEM1_PSEPW</name>